<evidence type="ECO:0000255" key="1">
    <source>
        <dbReference type="HAMAP-Rule" id="MF_00394"/>
    </source>
</evidence>
<reference key="1">
    <citation type="journal article" date="2003" name="Proc. Natl. Acad. Sci. U.S.A.">
        <title>Complete genome sequence and analysis of Wolinella succinogenes.</title>
        <authorList>
            <person name="Baar C."/>
            <person name="Eppinger M."/>
            <person name="Raddatz G."/>
            <person name="Simon J."/>
            <person name="Lanz C."/>
            <person name="Klimmek O."/>
            <person name="Nandakumar R."/>
            <person name="Gross R."/>
            <person name="Rosinus A."/>
            <person name="Keller H."/>
            <person name="Jagtap P."/>
            <person name="Linke B."/>
            <person name="Meyer F."/>
            <person name="Lederer H."/>
            <person name="Schuster S.C."/>
        </authorList>
    </citation>
    <scope>NUCLEOTIDE SEQUENCE [LARGE SCALE GENOMIC DNA]</scope>
    <source>
        <strain>ATCC 29543 / DSM 1740 / CCUG 13145 / JCM 31913 / LMG 7466 / NCTC 11488 / FDC 602W</strain>
    </source>
</reference>
<sequence length="297" mass="31606">MDVAIIGGGAWGSALYKALLEKSSVALVSRSGREGIHQCSLQEALEARFLVLAIASSALRGWLNEANLPPKTKILVACKGIEEGSGALVSEILEEFLPRENLAYLAGPSFAKEVREGLPCALVIHSHHLELAQEMSQFFPSWIRLYVENDVVGGEVCGAYKNVIAIAGGICDGLGLGYNAKASLVARGLVEMARFGQYFGAKIETFLGLSGAGDLFLTSGSTLSRNYRVGLGLAQGKSLEEILIELGEVAEGIKTARAITQIAQREGIHAPIAHEVNAILQGKNPKESLKDLLSHGR</sequence>
<protein>
    <recommendedName>
        <fullName evidence="1">Glycerol-3-phosphate dehydrogenase [NAD(P)+]</fullName>
        <ecNumber evidence="1">1.1.1.94</ecNumber>
    </recommendedName>
    <alternativeName>
        <fullName evidence="1">NAD(P)(+)-dependent glycerol-3-phosphate dehydrogenase</fullName>
    </alternativeName>
    <alternativeName>
        <fullName evidence="1">NAD(P)H-dependent dihydroxyacetone-phosphate reductase</fullName>
    </alternativeName>
</protein>
<name>GPDA_WOLSU</name>
<gene>
    <name evidence="1" type="primary">gpsA</name>
    <name type="ordered locus">WS2004</name>
</gene>
<organism>
    <name type="scientific">Wolinella succinogenes (strain ATCC 29543 / DSM 1740 / CCUG 13145 / JCM 31913 / LMG 7466 / NCTC 11488 / FDC 602W)</name>
    <name type="common">Vibrio succinogenes</name>
    <dbReference type="NCBI Taxonomy" id="273121"/>
    <lineage>
        <taxon>Bacteria</taxon>
        <taxon>Pseudomonadati</taxon>
        <taxon>Campylobacterota</taxon>
        <taxon>Epsilonproteobacteria</taxon>
        <taxon>Campylobacterales</taxon>
        <taxon>Helicobacteraceae</taxon>
        <taxon>Wolinella</taxon>
    </lineage>
</organism>
<accession>Q7M7Y3</accession>
<feature type="chain" id="PRO_0000138060" description="Glycerol-3-phosphate dehydrogenase [NAD(P)+]">
    <location>
        <begin position="1"/>
        <end position="297"/>
    </location>
</feature>
<feature type="active site" description="Proton acceptor" evidence="1">
    <location>
        <position position="161"/>
    </location>
</feature>
<feature type="binding site" evidence="1">
    <location>
        <position position="11"/>
    </location>
    <ligand>
        <name>NADPH</name>
        <dbReference type="ChEBI" id="CHEBI:57783"/>
    </ligand>
</feature>
<feature type="binding site" evidence="1">
    <location>
        <position position="30"/>
    </location>
    <ligand>
        <name>NADPH</name>
        <dbReference type="ChEBI" id="CHEBI:57783"/>
    </ligand>
</feature>
<feature type="binding site" evidence="1">
    <location>
        <position position="79"/>
    </location>
    <ligand>
        <name>NADPH</name>
        <dbReference type="ChEBI" id="CHEBI:57783"/>
    </ligand>
</feature>
<feature type="binding site" evidence="1">
    <location>
        <position position="79"/>
    </location>
    <ligand>
        <name>sn-glycerol 3-phosphate</name>
        <dbReference type="ChEBI" id="CHEBI:57597"/>
    </ligand>
</feature>
<feature type="binding site" evidence="1">
    <location>
        <position position="107"/>
    </location>
    <ligand>
        <name>sn-glycerol 3-phosphate</name>
        <dbReference type="ChEBI" id="CHEBI:57597"/>
    </ligand>
</feature>
<feature type="binding site" evidence="1">
    <location>
        <position position="109"/>
    </location>
    <ligand>
        <name>sn-glycerol 3-phosphate</name>
        <dbReference type="ChEBI" id="CHEBI:57597"/>
    </ligand>
</feature>
<feature type="binding site" evidence="1">
    <location>
        <position position="111"/>
    </location>
    <ligand>
        <name>NADPH</name>
        <dbReference type="ChEBI" id="CHEBI:57783"/>
    </ligand>
</feature>
<feature type="binding site" evidence="1">
    <location>
        <position position="161"/>
    </location>
    <ligand>
        <name>sn-glycerol 3-phosphate</name>
        <dbReference type="ChEBI" id="CHEBI:57597"/>
    </ligand>
</feature>
<feature type="binding site" evidence="1">
    <location>
        <position position="214"/>
    </location>
    <ligand>
        <name>sn-glycerol 3-phosphate</name>
        <dbReference type="ChEBI" id="CHEBI:57597"/>
    </ligand>
</feature>
<feature type="binding site" evidence="1">
    <location>
        <position position="224"/>
    </location>
    <ligand>
        <name>sn-glycerol 3-phosphate</name>
        <dbReference type="ChEBI" id="CHEBI:57597"/>
    </ligand>
</feature>
<feature type="binding site" evidence="1">
    <location>
        <position position="225"/>
    </location>
    <ligand>
        <name>NADPH</name>
        <dbReference type="ChEBI" id="CHEBI:57783"/>
    </ligand>
</feature>
<feature type="binding site" evidence="1">
    <location>
        <position position="225"/>
    </location>
    <ligand>
        <name>sn-glycerol 3-phosphate</name>
        <dbReference type="ChEBI" id="CHEBI:57597"/>
    </ligand>
</feature>
<feature type="binding site" evidence="1">
    <location>
        <position position="226"/>
    </location>
    <ligand>
        <name>sn-glycerol 3-phosphate</name>
        <dbReference type="ChEBI" id="CHEBI:57597"/>
    </ligand>
</feature>
<feature type="binding site" evidence="1">
    <location>
        <position position="249"/>
    </location>
    <ligand>
        <name>NADPH</name>
        <dbReference type="ChEBI" id="CHEBI:57783"/>
    </ligand>
</feature>
<feature type="binding site" evidence="1">
    <location>
        <position position="251"/>
    </location>
    <ligand>
        <name>NADPH</name>
        <dbReference type="ChEBI" id="CHEBI:57783"/>
    </ligand>
</feature>
<keyword id="KW-0963">Cytoplasm</keyword>
<keyword id="KW-0444">Lipid biosynthesis</keyword>
<keyword id="KW-0443">Lipid metabolism</keyword>
<keyword id="KW-0520">NAD</keyword>
<keyword id="KW-0521">NADP</keyword>
<keyword id="KW-0547">Nucleotide-binding</keyword>
<keyword id="KW-0560">Oxidoreductase</keyword>
<keyword id="KW-0594">Phospholipid biosynthesis</keyword>
<keyword id="KW-1208">Phospholipid metabolism</keyword>
<keyword id="KW-1185">Reference proteome</keyword>
<comment type="function">
    <text evidence="1">Catalyzes the reduction of the glycolytic intermediate dihydroxyacetone phosphate (DHAP) to sn-glycerol 3-phosphate (G3P), the key precursor for phospholipid synthesis.</text>
</comment>
<comment type="catalytic activity">
    <reaction evidence="1">
        <text>sn-glycerol 3-phosphate + NAD(+) = dihydroxyacetone phosphate + NADH + H(+)</text>
        <dbReference type="Rhea" id="RHEA:11092"/>
        <dbReference type="ChEBI" id="CHEBI:15378"/>
        <dbReference type="ChEBI" id="CHEBI:57540"/>
        <dbReference type="ChEBI" id="CHEBI:57597"/>
        <dbReference type="ChEBI" id="CHEBI:57642"/>
        <dbReference type="ChEBI" id="CHEBI:57945"/>
        <dbReference type="EC" id="1.1.1.94"/>
    </reaction>
    <physiologicalReaction direction="right-to-left" evidence="1">
        <dbReference type="Rhea" id="RHEA:11094"/>
    </physiologicalReaction>
</comment>
<comment type="catalytic activity">
    <reaction evidence="1">
        <text>sn-glycerol 3-phosphate + NADP(+) = dihydroxyacetone phosphate + NADPH + H(+)</text>
        <dbReference type="Rhea" id="RHEA:11096"/>
        <dbReference type="ChEBI" id="CHEBI:15378"/>
        <dbReference type="ChEBI" id="CHEBI:57597"/>
        <dbReference type="ChEBI" id="CHEBI:57642"/>
        <dbReference type="ChEBI" id="CHEBI:57783"/>
        <dbReference type="ChEBI" id="CHEBI:58349"/>
        <dbReference type="EC" id="1.1.1.94"/>
    </reaction>
    <physiologicalReaction direction="right-to-left" evidence="1">
        <dbReference type="Rhea" id="RHEA:11098"/>
    </physiologicalReaction>
</comment>
<comment type="pathway">
    <text evidence="1">Membrane lipid metabolism; glycerophospholipid metabolism.</text>
</comment>
<comment type="subcellular location">
    <subcellularLocation>
        <location evidence="1">Cytoplasm</location>
    </subcellularLocation>
</comment>
<comment type="similarity">
    <text evidence="1">Belongs to the NAD-dependent glycerol-3-phosphate dehydrogenase family.</text>
</comment>
<proteinExistence type="inferred from homology"/>
<dbReference type="EC" id="1.1.1.94" evidence="1"/>
<dbReference type="EMBL" id="BX571662">
    <property type="protein sequence ID" value="CAE11006.1"/>
    <property type="molecule type" value="Genomic_DNA"/>
</dbReference>
<dbReference type="RefSeq" id="WP_011139788.1">
    <property type="nucleotide sequence ID" value="NC_005090.1"/>
</dbReference>
<dbReference type="SMR" id="Q7M7Y3"/>
<dbReference type="STRING" id="273121.WS2004"/>
<dbReference type="KEGG" id="wsu:WS2004"/>
<dbReference type="eggNOG" id="COG0240">
    <property type="taxonomic scope" value="Bacteria"/>
</dbReference>
<dbReference type="HOGENOM" id="CLU_033449_0_2_7"/>
<dbReference type="UniPathway" id="UPA00940"/>
<dbReference type="Proteomes" id="UP000000422">
    <property type="component" value="Chromosome"/>
</dbReference>
<dbReference type="GO" id="GO:0005829">
    <property type="term" value="C:cytosol"/>
    <property type="evidence" value="ECO:0007669"/>
    <property type="project" value="TreeGrafter"/>
</dbReference>
<dbReference type="GO" id="GO:0047952">
    <property type="term" value="F:glycerol-3-phosphate dehydrogenase [NAD(P)+] activity"/>
    <property type="evidence" value="ECO:0007669"/>
    <property type="project" value="UniProtKB-UniRule"/>
</dbReference>
<dbReference type="GO" id="GO:0051287">
    <property type="term" value="F:NAD binding"/>
    <property type="evidence" value="ECO:0007669"/>
    <property type="project" value="InterPro"/>
</dbReference>
<dbReference type="GO" id="GO:0005975">
    <property type="term" value="P:carbohydrate metabolic process"/>
    <property type="evidence" value="ECO:0007669"/>
    <property type="project" value="InterPro"/>
</dbReference>
<dbReference type="GO" id="GO:0046167">
    <property type="term" value="P:glycerol-3-phosphate biosynthetic process"/>
    <property type="evidence" value="ECO:0007669"/>
    <property type="project" value="UniProtKB-UniRule"/>
</dbReference>
<dbReference type="GO" id="GO:0046168">
    <property type="term" value="P:glycerol-3-phosphate catabolic process"/>
    <property type="evidence" value="ECO:0007669"/>
    <property type="project" value="InterPro"/>
</dbReference>
<dbReference type="GO" id="GO:0006650">
    <property type="term" value="P:glycerophospholipid metabolic process"/>
    <property type="evidence" value="ECO:0007669"/>
    <property type="project" value="UniProtKB-UniRule"/>
</dbReference>
<dbReference type="GO" id="GO:0008654">
    <property type="term" value="P:phospholipid biosynthetic process"/>
    <property type="evidence" value="ECO:0007669"/>
    <property type="project" value="UniProtKB-KW"/>
</dbReference>
<dbReference type="FunFam" id="1.10.1040.10:FF:000025">
    <property type="entry name" value="Glycerol-3-phosphate dehydrogenase [NAD(P)+]"/>
    <property type="match status" value="1"/>
</dbReference>
<dbReference type="Gene3D" id="1.10.1040.10">
    <property type="entry name" value="N-(1-d-carboxylethyl)-l-norvaline Dehydrogenase, domain 2"/>
    <property type="match status" value="1"/>
</dbReference>
<dbReference type="Gene3D" id="3.40.50.720">
    <property type="entry name" value="NAD(P)-binding Rossmann-like Domain"/>
    <property type="match status" value="1"/>
</dbReference>
<dbReference type="HAMAP" id="MF_00394">
    <property type="entry name" value="NAD_Glyc3P_dehydrog"/>
    <property type="match status" value="1"/>
</dbReference>
<dbReference type="InterPro" id="IPR008927">
    <property type="entry name" value="6-PGluconate_DH-like_C_sf"/>
</dbReference>
<dbReference type="InterPro" id="IPR013328">
    <property type="entry name" value="6PGD_dom2"/>
</dbReference>
<dbReference type="InterPro" id="IPR006168">
    <property type="entry name" value="G3P_DH_NAD-dep"/>
</dbReference>
<dbReference type="InterPro" id="IPR006109">
    <property type="entry name" value="G3P_DH_NAD-dep_C"/>
</dbReference>
<dbReference type="InterPro" id="IPR011128">
    <property type="entry name" value="G3P_DH_NAD-dep_N"/>
</dbReference>
<dbReference type="InterPro" id="IPR036291">
    <property type="entry name" value="NAD(P)-bd_dom_sf"/>
</dbReference>
<dbReference type="NCBIfam" id="NF000940">
    <property type="entry name" value="PRK00094.1-2"/>
    <property type="match status" value="1"/>
</dbReference>
<dbReference type="NCBIfam" id="NF000942">
    <property type="entry name" value="PRK00094.1-4"/>
    <property type="match status" value="1"/>
</dbReference>
<dbReference type="NCBIfam" id="NF000943">
    <property type="entry name" value="PRK00094.2-1"/>
    <property type="match status" value="1"/>
</dbReference>
<dbReference type="PANTHER" id="PTHR11728">
    <property type="entry name" value="GLYCEROL-3-PHOSPHATE DEHYDROGENASE"/>
    <property type="match status" value="1"/>
</dbReference>
<dbReference type="PANTHER" id="PTHR11728:SF1">
    <property type="entry name" value="GLYCEROL-3-PHOSPHATE DEHYDROGENASE [NAD(+)] 2, CHLOROPLASTIC"/>
    <property type="match status" value="1"/>
</dbReference>
<dbReference type="Pfam" id="PF07479">
    <property type="entry name" value="NAD_Gly3P_dh_C"/>
    <property type="match status" value="1"/>
</dbReference>
<dbReference type="Pfam" id="PF01210">
    <property type="entry name" value="NAD_Gly3P_dh_N"/>
    <property type="match status" value="1"/>
</dbReference>
<dbReference type="PIRSF" id="PIRSF000114">
    <property type="entry name" value="Glycerol-3-P_dh"/>
    <property type="match status" value="1"/>
</dbReference>
<dbReference type="SUPFAM" id="SSF48179">
    <property type="entry name" value="6-phosphogluconate dehydrogenase C-terminal domain-like"/>
    <property type="match status" value="1"/>
</dbReference>
<dbReference type="SUPFAM" id="SSF51735">
    <property type="entry name" value="NAD(P)-binding Rossmann-fold domains"/>
    <property type="match status" value="1"/>
</dbReference>
<dbReference type="PROSITE" id="PS00957">
    <property type="entry name" value="NAD_G3PDH"/>
    <property type="match status" value="1"/>
</dbReference>